<organism>
    <name type="scientific">Trichodesmium erythraeum (strain IMS101)</name>
    <dbReference type="NCBI Taxonomy" id="203124"/>
    <lineage>
        <taxon>Bacteria</taxon>
        <taxon>Bacillati</taxon>
        <taxon>Cyanobacteriota</taxon>
        <taxon>Cyanophyceae</taxon>
        <taxon>Oscillatoriophycideae</taxon>
        <taxon>Oscillatoriales</taxon>
        <taxon>Microcoleaceae</taxon>
        <taxon>Trichodesmium</taxon>
    </lineage>
</organism>
<proteinExistence type="inferred from homology"/>
<protein>
    <recommendedName>
        <fullName evidence="1">UDP-N-acetylglucosamine--N-acetylmuramyl-(pentapeptide) pyrophosphoryl-undecaprenol N-acetylglucosamine transferase</fullName>
        <ecNumber evidence="1">2.4.1.227</ecNumber>
    </recommendedName>
    <alternativeName>
        <fullName evidence="1">Undecaprenyl-PP-MurNAc-pentapeptide-UDPGlcNAc GlcNAc transferase</fullName>
    </alternativeName>
</protein>
<reference key="1">
    <citation type="journal article" date="2015" name="Proc. Natl. Acad. Sci. U.S.A.">
        <title>Trichodesmium genome maintains abundant, widespread noncoding DNA in situ, despite oligotrophic lifestyle.</title>
        <authorList>
            <person name="Walworth N."/>
            <person name="Pfreundt U."/>
            <person name="Nelson W.C."/>
            <person name="Mincer T."/>
            <person name="Heidelberg J.F."/>
            <person name="Fu F."/>
            <person name="Waterbury J.B."/>
            <person name="Glavina del Rio T."/>
            <person name="Goodwin L."/>
            <person name="Kyrpides N.C."/>
            <person name="Land M.L."/>
            <person name="Woyke T."/>
            <person name="Hutchins D.A."/>
            <person name="Hess W.R."/>
            <person name="Webb E.A."/>
        </authorList>
    </citation>
    <scope>NUCLEOTIDE SEQUENCE [LARGE SCALE GENOMIC DNA]</scope>
    <source>
        <strain>IMS101</strain>
    </source>
</reference>
<sequence>MGKGEFTFNLLCCYNREAETLTNKPVKLLIAASGTGGHLFPAIAIANQLKDYHIEWLGVPDRLETKLIPSQYPLHTISVEGFQQKLGIETLKVLSRLIGSILKVRHILKEGKFQGLFTTGGYIAAPAIIAARYLGLPVILHESNVLPGKVTRWFSRLCNVVAVGFEEGTKYLSFEKTVYLGTPVREEFLFPQSLDLPIPENVPVIVIVGGSQGAVAINQLVRKCIPAWVENGAWIIHQTGENDPNAFSLKHPQYFTLPFYHNMASLFQRANLVISRAGAGSLTELAVTHTPSILIPYPYAADNHQAYNAKIFSNQNAALVFTEGELTPEKLQTEVLELLQSSEKLEKMSLGAESLAVKDSHKKLAGLVHEILSH</sequence>
<dbReference type="EC" id="2.4.1.227" evidence="1"/>
<dbReference type="EMBL" id="CP000393">
    <property type="protein sequence ID" value="ABG49696.1"/>
    <property type="molecule type" value="Genomic_DNA"/>
</dbReference>
<dbReference type="RefSeq" id="WP_011610092.1">
    <property type="nucleotide sequence ID" value="NC_008312.1"/>
</dbReference>
<dbReference type="SMR" id="Q119X8"/>
<dbReference type="STRING" id="203124.Tery_0207"/>
<dbReference type="CAZy" id="GT28">
    <property type="family name" value="Glycosyltransferase Family 28"/>
</dbReference>
<dbReference type="KEGG" id="ter:Tery_0207"/>
<dbReference type="eggNOG" id="COG0707">
    <property type="taxonomic scope" value="Bacteria"/>
</dbReference>
<dbReference type="HOGENOM" id="CLU_037404_0_1_3"/>
<dbReference type="UniPathway" id="UPA00219"/>
<dbReference type="GO" id="GO:0005886">
    <property type="term" value="C:plasma membrane"/>
    <property type="evidence" value="ECO:0007669"/>
    <property type="project" value="UniProtKB-SubCell"/>
</dbReference>
<dbReference type="GO" id="GO:0051991">
    <property type="term" value="F:UDP-N-acetyl-D-glucosamine:N-acetylmuramoyl-L-alanyl-D-glutamyl-meso-2,6-diaminopimelyl-D-alanyl-D-alanine-diphosphoundecaprenol 4-beta-N-acetylglucosaminlytransferase activity"/>
    <property type="evidence" value="ECO:0007669"/>
    <property type="project" value="RHEA"/>
</dbReference>
<dbReference type="GO" id="GO:0050511">
    <property type="term" value="F:undecaprenyldiphospho-muramoylpentapeptide beta-N-acetylglucosaminyltransferase activity"/>
    <property type="evidence" value="ECO:0007669"/>
    <property type="project" value="UniProtKB-UniRule"/>
</dbReference>
<dbReference type="GO" id="GO:0005975">
    <property type="term" value="P:carbohydrate metabolic process"/>
    <property type="evidence" value="ECO:0007669"/>
    <property type="project" value="InterPro"/>
</dbReference>
<dbReference type="GO" id="GO:0051301">
    <property type="term" value="P:cell division"/>
    <property type="evidence" value="ECO:0007669"/>
    <property type="project" value="UniProtKB-KW"/>
</dbReference>
<dbReference type="GO" id="GO:0071555">
    <property type="term" value="P:cell wall organization"/>
    <property type="evidence" value="ECO:0007669"/>
    <property type="project" value="UniProtKB-KW"/>
</dbReference>
<dbReference type="GO" id="GO:0030259">
    <property type="term" value="P:lipid glycosylation"/>
    <property type="evidence" value="ECO:0007669"/>
    <property type="project" value="UniProtKB-UniRule"/>
</dbReference>
<dbReference type="GO" id="GO:0009252">
    <property type="term" value="P:peptidoglycan biosynthetic process"/>
    <property type="evidence" value="ECO:0007669"/>
    <property type="project" value="UniProtKB-UniRule"/>
</dbReference>
<dbReference type="GO" id="GO:0008360">
    <property type="term" value="P:regulation of cell shape"/>
    <property type="evidence" value="ECO:0007669"/>
    <property type="project" value="UniProtKB-KW"/>
</dbReference>
<dbReference type="CDD" id="cd03785">
    <property type="entry name" value="GT28_MurG"/>
    <property type="match status" value="1"/>
</dbReference>
<dbReference type="Gene3D" id="3.40.50.2000">
    <property type="entry name" value="Glycogen Phosphorylase B"/>
    <property type="match status" value="2"/>
</dbReference>
<dbReference type="HAMAP" id="MF_00033">
    <property type="entry name" value="MurG"/>
    <property type="match status" value="1"/>
</dbReference>
<dbReference type="InterPro" id="IPR006009">
    <property type="entry name" value="GlcNAc_MurG"/>
</dbReference>
<dbReference type="InterPro" id="IPR007235">
    <property type="entry name" value="Glyco_trans_28_C"/>
</dbReference>
<dbReference type="InterPro" id="IPR004276">
    <property type="entry name" value="GlycoTrans_28_N"/>
</dbReference>
<dbReference type="NCBIfam" id="TIGR01133">
    <property type="entry name" value="murG"/>
    <property type="match status" value="1"/>
</dbReference>
<dbReference type="PANTHER" id="PTHR21015:SF22">
    <property type="entry name" value="GLYCOSYLTRANSFERASE"/>
    <property type="match status" value="1"/>
</dbReference>
<dbReference type="PANTHER" id="PTHR21015">
    <property type="entry name" value="UDP-N-ACETYLGLUCOSAMINE--N-ACETYLMURAMYL-(PENTAPEPTIDE) PYROPHOSPHORYL-UNDECAPRENOL N-ACETYLGLUCOSAMINE TRANSFERASE 1"/>
    <property type="match status" value="1"/>
</dbReference>
<dbReference type="Pfam" id="PF04101">
    <property type="entry name" value="Glyco_tran_28_C"/>
    <property type="match status" value="1"/>
</dbReference>
<dbReference type="Pfam" id="PF03033">
    <property type="entry name" value="Glyco_transf_28"/>
    <property type="match status" value="1"/>
</dbReference>
<dbReference type="SUPFAM" id="SSF53756">
    <property type="entry name" value="UDP-Glycosyltransferase/glycogen phosphorylase"/>
    <property type="match status" value="1"/>
</dbReference>
<gene>
    <name evidence="1" type="primary">murG</name>
    <name type="ordered locus">Tery_0207</name>
</gene>
<comment type="function">
    <text evidence="1">Cell wall formation. Catalyzes the transfer of a GlcNAc subunit on undecaprenyl-pyrophosphoryl-MurNAc-pentapeptide (lipid intermediate I) to form undecaprenyl-pyrophosphoryl-MurNAc-(pentapeptide)GlcNAc (lipid intermediate II).</text>
</comment>
<comment type="catalytic activity">
    <reaction evidence="1">
        <text>di-trans,octa-cis-undecaprenyl diphospho-N-acetyl-alpha-D-muramoyl-L-alanyl-D-glutamyl-meso-2,6-diaminopimeloyl-D-alanyl-D-alanine + UDP-N-acetyl-alpha-D-glucosamine = di-trans,octa-cis-undecaprenyl diphospho-[N-acetyl-alpha-D-glucosaminyl-(1-&gt;4)]-N-acetyl-alpha-D-muramoyl-L-alanyl-D-glutamyl-meso-2,6-diaminopimeloyl-D-alanyl-D-alanine + UDP + H(+)</text>
        <dbReference type="Rhea" id="RHEA:31227"/>
        <dbReference type="ChEBI" id="CHEBI:15378"/>
        <dbReference type="ChEBI" id="CHEBI:57705"/>
        <dbReference type="ChEBI" id="CHEBI:58223"/>
        <dbReference type="ChEBI" id="CHEBI:61387"/>
        <dbReference type="ChEBI" id="CHEBI:61388"/>
        <dbReference type="EC" id="2.4.1.227"/>
    </reaction>
</comment>
<comment type="pathway">
    <text evidence="1">Cell wall biogenesis; peptidoglycan biosynthesis.</text>
</comment>
<comment type="subcellular location">
    <subcellularLocation>
        <location evidence="1">Cell inner membrane</location>
        <topology evidence="1">Peripheral membrane protein</topology>
        <orientation evidence="1">Cytoplasmic side</orientation>
    </subcellularLocation>
</comment>
<comment type="similarity">
    <text evidence="1">Belongs to the glycosyltransferase 28 family. MurG subfamily.</text>
</comment>
<keyword id="KW-0131">Cell cycle</keyword>
<keyword id="KW-0132">Cell division</keyword>
<keyword id="KW-0997">Cell inner membrane</keyword>
<keyword id="KW-1003">Cell membrane</keyword>
<keyword id="KW-0133">Cell shape</keyword>
<keyword id="KW-0961">Cell wall biogenesis/degradation</keyword>
<keyword id="KW-0328">Glycosyltransferase</keyword>
<keyword id="KW-0472">Membrane</keyword>
<keyword id="KW-0573">Peptidoglycan synthesis</keyword>
<keyword id="KW-0808">Transferase</keyword>
<name>MURG_TRIEI</name>
<feature type="chain" id="PRO_0000315196" description="UDP-N-acetylglucosamine--N-acetylmuramyl-(pentapeptide) pyrophosphoryl-undecaprenol N-acetylglucosamine transferase">
    <location>
        <begin position="1"/>
        <end position="374"/>
    </location>
</feature>
<feature type="binding site" evidence="1">
    <location>
        <begin position="35"/>
        <end position="37"/>
    </location>
    <ligand>
        <name>UDP-N-acetyl-alpha-D-glucosamine</name>
        <dbReference type="ChEBI" id="CHEBI:57705"/>
    </ligand>
</feature>
<feature type="binding site" evidence="1">
    <location>
        <position position="144"/>
    </location>
    <ligand>
        <name>UDP-N-acetyl-alpha-D-glucosamine</name>
        <dbReference type="ChEBI" id="CHEBI:57705"/>
    </ligand>
</feature>
<feature type="binding site" evidence="1">
    <location>
        <position position="185"/>
    </location>
    <ligand>
        <name>UDP-N-acetyl-alpha-D-glucosamine</name>
        <dbReference type="ChEBI" id="CHEBI:57705"/>
    </ligand>
</feature>
<feature type="binding site" evidence="1">
    <location>
        <position position="211"/>
    </location>
    <ligand>
        <name>UDP-N-acetyl-alpha-D-glucosamine</name>
        <dbReference type="ChEBI" id="CHEBI:57705"/>
    </ligand>
</feature>
<feature type="binding site" evidence="1">
    <location>
        <position position="305"/>
    </location>
    <ligand>
        <name>UDP-N-acetyl-alpha-D-glucosamine</name>
        <dbReference type="ChEBI" id="CHEBI:57705"/>
    </ligand>
</feature>
<evidence type="ECO:0000255" key="1">
    <source>
        <dbReference type="HAMAP-Rule" id="MF_00033"/>
    </source>
</evidence>
<accession>Q119X8</accession>